<reference key="1">
    <citation type="journal article" date="1990" name="J. Biol. Chem.">
        <title>Glutamyl-tRNA synthetases of Bacillus subtilis 168T and of Bacillus stearothermophilus. Cloning and sequencing of the gltX genes and comparison with other aminoacyl-tRNA synthetases.</title>
        <authorList>
            <person name="Breton R."/>
            <person name="Watson D."/>
            <person name="Yaguchi M."/>
            <person name="Lapointe J."/>
        </authorList>
    </citation>
    <scope>NUCLEOTIDE SEQUENCE [GENOMIC DNA]</scope>
</reference>
<protein>
    <recommendedName>
        <fullName evidence="1">Glutamate--tRNA ligase</fullName>
        <ecNumber evidence="1">6.1.1.17</ecNumber>
    </recommendedName>
    <alternativeName>
        <fullName evidence="1">Glutamyl-tRNA synthetase</fullName>
        <shortName evidence="1">GluRS</shortName>
    </alternativeName>
</protein>
<dbReference type="EC" id="6.1.1.17" evidence="1"/>
<dbReference type="EMBL" id="M55072">
    <property type="protein sequence ID" value="AAA22494.1"/>
    <property type="molecule type" value="Genomic_DNA"/>
</dbReference>
<dbReference type="PIR" id="B36090">
    <property type="entry name" value="SYBSES"/>
</dbReference>
<dbReference type="SMR" id="P22249"/>
<dbReference type="GO" id="GO:0005829">
    <property type="term" value="C:cytosol"/>
    <property type="evidence" value="ECO:0007669"/>
    <property type="project" value="TreeGrafter"/>
</dbReference>
<dbReference type="GO" id="GO:0005524">
    <property type="term" value="F:ATP binding"/>
    <property type="evidence" value="ECO:0007669"/>
    <property type="project" value="UniProtKB-UniRule"/>
</dbReference>
<dbReference type="GO" id="GO:0004818">
    <property type="term" value="F:glutamate-tRNA ligase activity"/>
    <property type="evidence" value="ECO:0007669"/>
    <property type="project" value="UniProtKB-UniRule"/>
</dbReference>
<dbReference type="GO" id="GO:0000049">
    <property type="term" value="F:tRNA binding"/>
    <property type="evidence" value="ECO:0007669"/>
    <property type="project" value="InterPro"/>
</dbReference>
<dbReference type="GO" id="GO:0008270">
    <property type="term" value="F:zinc ion binding"/>
    <property type="evidence" value="ECO:0007669"/>
    <property type="project" value="InterPro"/>
</dbReference>
<dbReference type="GO" id="GO:0006424">
    <property type="term" value="P:glutamyl-tRNA aminoacylation"/>
    <property type="evidence" value="ECO:0007669"/>
    <property type="project" value="UniProtKB-UniRule"/>
</dbReference>
<dbReference type="CDD" id="cd00808">
    <property type="entry name" value="GluRS_core"/>
    <property type="match status" value="1"/>
</dbReference>
<dbReference type="FunFam" id="1.10.10.350:FF:000002">
    <property type="entry name" value="Glutamate--tRNA ligase"/>
    <property type="match status" value="1"/>
</dbReference>
<dbReference type="FunFam" id="3.40.50.620:FF:000007">
    <property type="entry name" value="Glutamate--tRNA ligase"/>
    <property type="match status" value="1"/>
</dbReference>
<dbReference type="Gene3D" id="1.10.10.350">
    <property type="match status" value="1"/>
</dbReference>
<dbReference type="Gene3D" id="3.40.50.620">
    <property type="entry name" value="HUPs"/>
    <property type="match status" value="1"/>
</dbReference>
<dbReference type="HAMAP" id="MF_00022">
    <property type="entry name" value="Glu_tRNA_synth_type1"/>
    <property type="match status" value="1"/>
</dbReference>
<dbReference type="InterPro" id="IPR045462">
    <property type="entry name" value="aa-tRNA-synth_I_cd-bd"/>
</dbReference>
<dbReference type="InterPro" id="IPR020751">
    <property type="entry name" value="aa-tRNA-synth_I_codon-bd_sub2"/>
</dbReference>
<dbReference type="InterPro" id="IPR001412">
    <property type="entry name" value="aa-tRNA-synth_I_CS"/>
</dbReference>
<dbReference type="InterPro" id="IPR008925">
    <property type="entry name" value="aa_tRNA-synth_I_cd-bd_sf"/>
</dbReference>
<dbReference type="InterPro" id="IPR004527">
    <property type="entry name" value="Glu-tRNA-ligase_bac/mito"/>
</dbReference>
<dbReference type="InterPro" id="IPR000924">
    <property type="entry name" value="Glu/Gln-tRNA-synth"/>
</dbReference>
<dbReference type="InterPro" id="IPR020058">
    <property type="entry name" value="Glu/Gln-tRNA-synth_Ib_cat-dom"/>
</dbReference>
<dbReference type="InterPro" id="IPR049940">
    <property type="entry name" value="GluQ/Sye"/>
</dbReference>
<dbReference type="InterPro" id="IPR033910">
    <property type="entry name" value="GluRS_core"/>
</dbReference>
<dbReference type="InterPro" id="IPR014729">
    <property type="entry name" value="Rossmann-like_a/b/a_fold"/>
</dbReference>
<dbReference type="NCBIfam" id="TIGR00464">
    <property type="entry name" value="gltX_bact"/>
    <property type="match status" value="1"/>
</dbReference>
<dbReference type="PANTHER" id="PTHR43311">
    <property type="entry name" value="GLUTAMATE--TRNA LIGASE"/>
    <property type="match status" value="1"/>
</dbReference>
<dbReference type="PANTHER" id="PTHR43311:SF2">
    <property type="entry name" value="GLUTAMATE--TRNA LIGASE, MITOCHONDRIAL-RELATED"/>
    <property type="match status" value="1"/>
</dbReference>
<dbReference type="Pfam" id="PF19269">
    <property type="entry name" value="Anticodon_2"/>
    <property type="match status" value="1"/>
</dbReference>
<dbReference type="Pfam" id="PF00749">
    <property type="entry name" value="tRNA-synt_1c"/>
    <property type="match status" value="1"/>
</dbReference>
<dbReference type="PRINTS" id="PR00987">
    <property type="entry name" value="TRNASYNTHGLU"/>
</dbReference>
<dbReference type="SUPFAM" id="SSF48163">
    <property type="entry name" value="An anticodon-binding domain of class I aminoacyl-tRNA synthetases"/>
    <property type="match status" value="1"/>
</dbReference>
<dbReference type="SUPFAM" id="SSF52374">
    <property type="entry name" value="Nucleotidylyl transferase"/>
    <property type="match status" value="1"/>
</dbReference>
<dbReference type="PROSITE" id="PS00178">
    <property type="entry name" value="AA_TRNA_LIGASE_I"/>
    <property type="match status" value="1"/>
</dbReference>
<accession>P22249</accession>
<keyword id="KW-0030">Aminoacyl-tRNA synthetase</keyword>
<keyword id="KW-0067">ATP-binding</keyword>
<keyword id="KW-0963">Cytoplasm</keyword>
<keyword id="KW-0436">Ligase</keyword>
<keyword id="KW-0547">Nucleotide-binding</keyword>
<keyword id="KW-0648">Protein biosynthesis</keyword>
<gene>
    <name evidence="1" type="primary">gltX</name>
</gene>
<sequence length="489" mass="56183">MAKDVRVGYAPSPTGHLHIGGARTALFNYLFARHHGGKMIVRIEDTDIERNVEGGEQSQLENLQWLGIDYDESVDKDGGYGPYRQTERLDIYRKYVDELLEQGHAYKCFCTPEELEREREEQRAAGIAAPQYSGKCRRLTPEQVAELEAQGKPYTIRLKVPEGKTYEVDDLVRGKVTFESKDIGDWVIVKANGIPTYNFAVVIDDHLMEISHVFRGEEHLSNTPKQLMVYEYFGWEPPQFAHLTLIVNEQRKKLSKRDESIIQFVSQYKELGYLPEAMFNFFALLGWSPEGEEEIFSKDELIRIFDVSRLSKSPSMFDTKKLTWMNNQYIKKLDLDRLVELALPHLVKAGRLPADMSDEQRQWARDLIALYQEQMSYGAEIVPLSELFFKEEVEYEDEARQVLAEEQVPDVLSAFLAHVRDLDPFTADEIKAAIKAVQKATGQKGKKLFMPIRAAVTGQTHGPELPFAIQLLGKQKVIERLERALQEKF</sequence>
<feature type="chain" id="PRO_0000119507" description="Glutamate--tRNA ligase">
    <location>
        <begin position="1"/>
        <end position="489"/>
    </location>
</feature>
<feature type="short sequence motif" description="'HIGH' region" evidence="1">
    <location>
        <begin position="11"/>
        <end position="21"/>
    </location>
</feature>
<feature type="short sequence motif" description="'KMSKS' region" evidence="1">
    <location>
        <begin position="253"/>
        <end position="257"/>
    </location>
</feature>
<feature type="binding site" evidence="1">
    <location>
        <position position="256"/>
    </location>
    <ligand>
        <name>ATP</name>
        <dbReference type="ChEBI" id="CHEBI:30616"/>
    </ligand>
</feature>
<comment type="function">
    <text evidence="1">Catalyzes the attachment of glutamate to tRNA(Glu) in a two-step reaction: glutamate is first activated by ATP to form Glu-AMP and then transferred to the acceptor end of tRNA(Glu).</text>
</comment>
<comment type="catalytic activity">
    <reaction evidence="1">
        <text>tRNA(Glu) + L-glutamate + ATP = L-glutamyl-tRNA(Glu) + AMP + diphosphate</text>
        <dbReference type="Rhea" id="RHEA:23540"/>
        <dbReference type="Rhea" id="RHEA-COMP:9663"/>
        <dbReference type="Rhea" id="RHEA-COMP:9680"/>
        <dbReference type="ChEBI" id="CHEBI:29985"/>
        <dbReference type="ChEBI" id="CHEBI:30616"/>
        <dbReference type="ChEBI" id="CHEBI:33019"/>
        <dbReference type="ChEBI" id="CHEBI:78442"/>
        <dbReference type="ChEBI" id="CHEBI:78520"/>
        <dbReference type="ChEBI" id="CHEBI:456215"/>
        <dbReference type="EC" id="6.1.1.17"/>
    </reaction>
</comment>
<comment type="subunit">
    <text evidence="1">Monomer.</text>
</comment>
<comment type="subcellular location">
    <subcellularLocation>
        <location evidence="1">Cytoplasm</location>
    </subcellularLocation>
</comment>
<comment type="similarity">
    <text evidence="1">Belongs to the class-I aminoacyl-tRNA synthetase family. Glutamate--tRNA ligase type 1 subfamily.</text>
</comment>
<proteinExistence type="inferred from homology"/>
<name>SYE_GEOSE</name>
<evidence type="ECO:0000255" key="1">
    <source>
        <dbReference type="HAMAP-Rule" id="MF_00022"/>
    </source>
</evidence>
<organism>
    <name type="scientific">Geobacillus stearothermophilus</name>
    <name type="common">Bacillus stearothermophilus</name>
    <dbReference type="NCBI Taxonomy" id="1422"/>
    <lineage>
        <taxon>Bacteria</taxon>
        <taxon>Bacillati</taxon>
        <taxon>Bacillota</taxon>
        <taxon>Bacilli</taxon>
        <taxon>Bacillales</taxon>
        <taxon>Anoxybacillaceae</taxon>
        <taxon>Geobacillus</taxon>
    </lineage>
</organism>